<gene>
    <name evidence="3" type="ORF">orf3</name>
</gene>
<sequence length="331" mass="37120">MPAATTSIFYLPDINIAPWLESPTSPSGQQVVDQVRKACTSTGFFQLTGHGLSQDVVEDIFAASAKFFALPKDVKQGLNFTKNLGFRGYELIGAQVYESDVLPDLKEGFLAGIDLPFEDMRVQNKRFFAGQNVWPPPDVLPYAEFREPVEKYYKSIMQLCFTVMDLVAATLPYGPDVFDEWKSHEPACPLRLLHYPPTPAHVAGKTRQLGSSAHTDFGALTLLLQDSHEGLEVLNHDTGDWVLVPPKPGAFVVNIADMMTMVTVGEYKSSKHRVINRNETEDRYSVVFFMDGNVDYKLRRLDKIGQPIGDDEDLLTVEDYMLGKRNSTYVK</sequence>
<name>ASC3_DIDFA</name>
<reference key="1">
    <citation type="journal article" date="2019" name="MSphere">
        <title>Identification of a polyketide synthase gene responsible for ascochitine biosynthesis in Ascochyta fabae and its abrogation in sister taxa.</title>
        <authorList>
            <person name="Kim W."/>
            <person name="Lichtenzveig J."/>
            <person name="Syme R.A."/>
            <person name="Williams A.H."/>
            <person name="Peever T.L."/>
            <person name="Chen W."/>
        </authorList>
    </citation>
    <scope>NUCLEOTIDE SEQUENCE [GENOMIC DNA]</scope>
    <scope>FUNCTION</scope>
    <source>
        <strain>AF247/15</strain>
    </source>
</reference>
<proteinExistence type="inferred from homology"/>
<accession>A0A5C1RDG7</accession>
<evidence type="ECO:0000255" key="1">
    <source>
        <dbReference type="PROSITE-ProRule" id="PRU00805"/>
    </source>
</evidence>
<evidence type="ECO:0000269" key="2">
    <source>
    </source>
</evidence>
<evidence type="ECO:0000303" key="3">
    <source>
    </source>
</evidence>
<evidence type="ECO:0000305" key="4"/>
<evidence type="ECO:0000305" key="5">
    <source>
    </source>
</evidence>
<feature type="chain" id="PRO_0000448986" description="2-oxoglutarate-dependent dioxygenase">
    <location>
        <begin position="1"/>
        <end position="331"/>
    </location>
</feature>
<feature type="domain" description="Fe2OG dioxygenase" evidence="1">
    <location>
        <begin position="186"/>
        <end position="292"/>
    </location>
</feature>
<feature type="binding site" evidence="1">
    <location>
        <position position="214"/>
    </location>
    <ligand>
        <name>Fe cation</name>
        <dbReference type="ChEBI" id="CHEBI:24875"/>
    </ligand>
</feature>
<feature type="binding site" evidence="1">
    <location>
        <position position="216"/>
    </location>
    <ligand>
        <name>Fe cation</name>
        <dbReference type="ChEBI" id="CHEBI:24875"/>
    </ligand>
</feature>
<feature type="binding site" evidence="1">
    <location>
        <position position="272"/>
    </location>
    <ligand>
        <name>Fe cation</name>
        <dbReference type="ChEBI" id="CHEBI:24875"/>
    </ligand>
</feature>
<feature type="binding site" evidence="1">
    <location>
        <position position="283"/>
    </location>
    <ligand>
        <name>2-oxoglutarate</name>
        <dbReference type="ChEBI" id="CHEBI:16810"/>
    </ligand>
</feature>
<keyword id="KW-0223">Dioxygenase</keyword>
<keyword id="KW-0408">Iron</keyword>
<keyword id="KW-0479">Metal-binding</keyword>
<keyword id="KW-0560">Oxidoreductase</keyword>
<keyword id="KW-0843">Virulence</keyword>
<organism>
    <name type="scientific">Didymella fabae</name>
    <name type="common">Leaf and pod spot disease fungus</name>
    <name type="synonym">Ascochyta fabae</name>
    <dbReference type="NCBI Taxonomy" id="372025"/>
    <lineage>
        <taxon>Eukaryota</taxon>
        <taxon>Fungi</taxon>
        <taxon>Dikarya</taxon>
        <taxon>Ascomycota</taxon>
        <taxon>Pezizomycotina</taxon>
        <taxon>Dothideomycetes</taxon>
        <taxon>Pleosporomycetidae</taxon>
        <taxon>Pleosporales</taxon>
        <taxon>Pleosporineae</taxon>
        <taxon>Didymellaceae</taxon>
        <taxon>Ascochyta</taxon>
    </lineage>
</organism>
<dbReference type="EC" id="1.14.-.-"/>
<dbReference type="EMBL" id="MN052624">
    <property type="protein sequence ID" value="QEN17971.1"/>
    <property type="molecule type" value="Genomic_DNA"/>
</dbReference>
<dbReference type="SMR" id="A0A5C1RDG7"/>
<dbReference type="GO" id="GO:0051213">
    <property type="term" value="F:dioxygenase activity"/>
    <property type="evidence" value="ECO:0007669"/>
    <property type="project" value="UniProtKB-KW"/>
</dbReference>
<dbReference type="GO" id="GO:0046872">
    <property type="term" value="F:metal ion binding"/>
    <property type="evidence" value="ECO:0007669"/>
    <property type="project" value="UniProtKB-KW"/>
</dbReference>
<dbReference type="GO" id="GO:0044283">
    <property type="term" value="P:small molecule biosynthetic process"/>
    <property type="evidence" value="ECO:0007669"/>
    <property type="project" value="UniProtKB-ARBA"/>
</dbReference>
<dbReference type="Gene3D" id="2.60.120.330">
    <property type="entry name" value="B-lactam Antibiotic, Isopenicillin N Synthase, Chain"/>
    <property type="match status" value="1"/>
</dbReference>
<dbReference type="InterPro" id="IPR026992">
    <property type="entry name" value="DIOX_N"/>
</dbReference>
<dbReference type="InterPro" id="IPR044861">
    <property type="entry name" value="IPNS-like_FE2OG_OXY"/>
</dbReference>
<dbReference type="InterPro" id="IPR027443">
    <property type="entry name" value="IPNS-like_sf"/>
</dbReference>
<dbReference type="InterPro" id="IPR050231">
    <property type="entry name" value="Iron_ascorbate_oxido_reductase"/>
</dbReference>
<dbReference type="InterPro" id="IPR005123">
    <property type="entry name" value="Oxoglu/Fe-dep_dioxygenase_dom"/>
</dbReference>
<dbReference type="PANTHER" id="PTHR47990">
    <property type="entry name" value="2-OXOGLUTARATE (2OG) AND FE(II)-DEPENDENT OXYGENASE SUPERFAMILY PROTEIN-RELATED"/>
    <property type="match status" value="1"/>
</dbReference>
<dbReference type="Pfam" id="PF03171">
    <property type="entry name" value="2OG-FeII_Oxy"/>
    <property type="match status" value="1"/>
</dbReference>
<dbReference type="Pfam" id="PF14226">
    <property type="entry name" value="DIOX_N"/>
    <property type="match status" value="1"/>
</dbReference>
<dbReference type="PRINTS" id="PR00682">
    <property type="entry name" value="IPNSYNTHASE"/>
</dbReference>
<dbReference type="SUPFAM" id="SSF51197">
    <property type="entry name" value="Clavaminate synthase-like"/>
    <property type="match status" value="1"/>
</dbReference>
<dbReference type="PROSITE" id="PS51471">
    <property type="entry name" value="FE2OG_OXY"/>
    <property type="match status" value="1"/>
</dbReference>
<comment type="function">
    <text evidence="2 5">2-oxoglutarate-dependent dioxygenase; part of the gene cluster that mediates the biosynthesis of the selective antifungal agent ascochitine, an o-quinone methide that plays a possible protective role against other microbial competitors in nature and is considered to be important for pathogenicity of legume-associated Didymella species (PubMed:31554725). The pathway probably begins with the synthesis of a keto-aldehyde intermediate by the ascochitine non-reducing polyketide synthase pksAC from successive condensations of 4 malonyl-CoA units, presumably with a simple acetyl-CoA starter unit (Probable). Release of the keto-aldehyde intermediate is consistent with the presence of the C-terminal reductive release domain (Probable). The HR-PKS (orf7) probably makes a diketide starter unit which is passed to the non-reducing polyketide synthase pksAC for further extension, producing ascochital and ascochitine (Probable). The aldehyde dehydrogenase (orf1), the 2-oxoglutarate-dependent dioxygenase (orf3) and the dehydrogenase (orf9) are probably involved in subsequent oxidations of methyl groups to the carboxylic acid of the heterocyclic ring (Probable). The ascochitine gene cluster also includes a gene encoding a short peptide with a cupin domain (orf2) that is often found in secondary metabolite gene clusters and which function has still to be determined (Probable).</text>
</comment>
<comment type="cofactor">
    <cofactor evidence="1">
        <name>Fe(2+)</name>
        <dbReference type="ChEBI" id="CHEBI:29033"/>
    </cofactor>
    <text evidence="1">Binds 1 Fe(2+) ion per subunit.</text>
</comment>
<comment type="pathway">
    <text evidence="5">Mycotoxin biosynthesis.</text>
</comment>
<comment type="similarity">
    <text evidence="4">Belongs to the iron/ascorbate-dependent oxidoreductase family.</text>
</comment>
<protein>
    <recommendedName>
        <fullName evidence="3">2-oxoglutarate-dependent dioxygenase</fullName>
        <ecNumber>1.14.-.-</ecNumber>
    </recommendedName>
    <alternativeName>
        <fullName evidence="3">Ascochitine biosynthesis cluster protein 3</fullName>
    </alternativeName>
</protein>